<accession>B8HTW2</accession>
<proteinExistence type="inferred from homology"/>
<comment type="function">
    <text evidence="1">Binds directly to 16S ribosomal RNA.</text>
</comment>
<comment type="similarity">
    <text evidence="1">Belongs to the bacterial ribosomal protein bS20 family.</text>
</comment>
<name>RS20_CYAP4</name>
<dbReference type="EMBL" id="CP001344">
    <property type="protein sequence ID" value="ACL42882.1"/>
    <property type="molecule type" value="Genomic_DNA"/>
</dbReference>
<dbReference type="SMR" id="B8HTW2"/>
<dbReference type="STRING" id="395961.Cyan7425_0490"/>
<dbReference type="KEGG" id="cyn:Cyan7425_0490"/>
<dbReference type="eggNOG" id="COG0268">
    <property type="taxonomic scope" value="Bacteria"/>
</dbReference>
<dbReference type="HOGENOM" id="CLU_160655_5_0_3"/>
<dbReference type="OrthoDB" id="9808392at2"/>
<dbReference type="GO" id="GO:0005829">
    <property type="term" value="C:cytosol"/>
    <property type="evidence" value="ECO:0007669"/>
    <property type="project" value="TreeGrafter"/>
</dbReference>
<dbReference type="GO" id="GO:0015935">
    <property type="term" value="C:small ribosomal subunit"/>
    <property type="evidence" value="ECO:0007669"/>
    <property type="project" value="TreeGrafter"/>
</dbReference>
<dbReference type="GO" id="GO:0070181">
    <property type="term" value="F:small ribosomal subunit rRNA binding"/>
    <property type="evidence" value="ECO:0007669"/>
    <property type="project" value="TreeGrafter"/>
</dbReference>
<dbReference type="GO" id="GO:0003735">
    <property type="term" value="F:structural constituent of ribosome"/>
    <property type="evidence" value="ECO:0007669"/>
    <property type="project" value="InterPro"/>
</dbReference>
<dbReference type="GO" id="GO:0006412">
    <property type="term" value="P:translation"/>
    <property type="evidence" value="ECO:0007669"/>
    <property type="project" value="UniProtKB-UniRule"/>
</dbReference>
<dbReference type="FunFam" id="1.20.58.110:FF:000001">
    <property type="entry name" value="30S ribosomal protein S20"/>
    <property type="match status" value="1"/>
</dbReference>
<dbReference type="Gene3D" id="1.20.58.110">
    <property type="entry name" value="Ribosomal protein S20"/>
    <property type="match status" value="1"/>
</dbReference>
<dbReference type="HAMAP" id="MF_00500">
    <property type="entry name" value="Ribosomal_bS20"/>
    <property type="match status" value="1"/>
</dbReference>
<dbReference type="InterPro" id="IPR002583">
    <property type="entry name" value="Ribosomal_bS20"/>
</dbReference>
<dbReference type="InterPro" id="IPR036510">
    <property type="entry name" value="Ribosomal_bS20_sf"/>
</dbReference>
<dbReference type="NCBIfam" id="TIGR00029">
    <property type="entry name" value="S20"/>
    <property type="match status" value="1"/>
</dbReference>
<dbReference type="PANTHER" id="PTHR33398">
    <property type="entry name" value="30S RIBOSOMAL PROTEIN S20"/>
    <property type="match status" value="1"/>
</dbReference>
<dbReference type="PANTHER" id="PTHR33398:SF1">
    <property type="entry name" value="SMALL RIBOSOMAL SUBUNIT PROTEIN BS20C"/>
    <property type="match status" value="1"/>
</dbReference>
<dbReference type="Pfam" id="PF01649">
    <property type="entry name" value="Ribosomal_S20p"/>
    <property type="match status" value="1"/>
</dbReference>
<dbReference type="SUPFAM" id="SSF46992">
    <property type="entry name" value="Ribosomal protein S20"/>
    <property type="match status" value="1"/>
</dbReference>
<sequence length="99" mass="10822">MANIKSAIKRVEITERNRLHNKSYKSAVKTLTKKYFDAVAAYSASPSNDALQAAQTSLSAAFSKIDKAVKRGVIHRNNGARKKARLARALNRHLANAAS</sequence>
<evidence type="ECO:0000255" key="1">
    <source>
        <dbReference type="HAMAP-Rule" id="MF_00500"/>
    </source>
</evidence>
<evidence type="ECO:0000305" key="2"/>
<organism>
    <name type="scientific">Cyanothece sp. (strain PCC 7425 / ATCC 29141)</name>
    <dbReference type="NCBI Taxonomy" id="395961"/>
    <lineage>
        <taxon>Bacteria</taxon>
        <taxon>Bacillati</taxon>
        <taxon>Cyanobacteriota</taxon>
        <taxon>Cyanophyceae</taxon>
        <taxon>Gomontiellales</taxon>
        <taxon>Cyanothecaceae</taxon>
        <taxon>Cyanothece</taxon>
    </lineage>
</organism>
<protein>
    <recommendedName>
        <fullName evidence="1">Small ribosomal subunit protein bS20</fullName>
    </recommendedName>
    <alternativeName>
        <fullName evidence="2">30S ribosomal protein S20</fullName>
    </alternativeName>
</protein>
<gene>
    <name evidence="1" type="primary">rpsT</name>
    <name evidence="1" type="synonym">rps20</name>
    <name type="ordered locus">Cyan7425_0490</name>
</gene>
<feature type="chain" id="PRO_1000194239" description="Small ribosomal subunit protein bS20">
    <location>
        <begin position="1"/>
        <end position="99"/>
    </location>
</feature>
<keyword id="KW-0687">Ribonucleoprotein</keyword>
<keyword id="KW-0689">Ribosomal protein</keyword>
<keyword id="KW-0694">RNA-binding</keyword>
<keyword id="KW-0699">rRNA-binding</keyword>
<reference key="1">
    <citation type="journal article" date="2011" name="MBio">
        <title>Novel metabolic attributes of the genus Cyanothece, comprising a group of unicellular nitrogen-fixing Cyanobacteria.</title>
        <authorList>
            <person name="Bandyopadhyay A."/>
            <person name="Elvitigala T."/>
            <person name="Welsh E."/>
            <person name="Stockel J."/>
            <person name="Liberton M."/>
            <person name="Min H."/>
            <person name="Sherman L.A."/>
            <person name="Pakrasi H.B."/>
        </authorList>
    </citation>
    <scope>NUCLEOTIDE SEQUENCE [LARGE SCALE GENOMIC DNA]</scope>
    <source>
        <strain>PCC 7425 / ATCC 29141</strain>
    </source>
</reference>